<keyword id="KW-0450">Lipoyl</keyword>
<name>GCSH_LISMH</name>
<evidence type="ECO:0000255" key="1">
    <source>
        <dbReference type="HAMAP-Rule" id="MF_00272"/>
    </source>
</evidence>
<evidence type="ECO:0000255" key="2">
    <source>
        <dbReference type="PROSITE-ProRule" id="PRU01066"/>
    </source>
</evidence>
<sequence length="125" mass="13801">MSLPKDLLYTEEHEWVKADDGSYVIGITDFAQDQLGDIVFVELPEVGDTVTKGDSIGSIESVKTVSDFYAPVTGKVVAVNETLEDEPELINSNPYDTGWILKLEEVEEADVKALLSSDDYEKVLD</sequence>
<proteinExistence type="inferred from homology"/>
<feature type="chain" id="PRO_1000132423" description="Glycine cleavage system H protein">
    <location>
        <begin position="1"/>
        <end position="125"/>
    </location>
</feature>
<feature type="domain" description="Lipoyl-binding" evidence="2">
    <location>
        <begin position="22"/>
        <end position="104"/>
    </location>
</feature>
<feature type="modified residue" description="N6-lipoyllysine" evidence="1">
    <location>
        <position position="63"/>
    </location>
</feature>
<comment type="function">
    <text evidence="1">The glycine cleavage system catalyzes the degradation of glycine. The H protein shuttles the methylamine group of glycine from the P protein to the T protein.</text>
</comment>
<comment type="function">
    <text evidence="1">Is also involved in protein lipoylation via its role as an octanoyl/lipoyl carrier protein intermediate.</text>
</comment>
<comment type="cofactor">
    <cofactor evidence="1">
        <name>(R)-lipoate</name>
        <dbReference type="ChEBI" id="CHEBI:83088"/>
    </cofactor>
    <text evidence="1">Binds 1 lipoyl cofactor covalently.</text>
</comment>
<comment type="subunit">
    <text evidence="1">The glycine cleavage system is composed of four proteins: P, T, L and H.</text>
</comment>
<comment type="similarity">
    <text evidence="1">Belongs to the GcvH family.</text>
</comment>
<gene>
    <name evidence="1" type="primary">gcvH</name>
    <name type="ordered locus">LMHCC_0177</name>
</gene>
<reference key="1">
    <citation type="journal article" date="2011" name="J. Bacteriol.">
        <title>Genome sequence of lineage III Listeria monocytogenes strain HCC23.</title>
        <authorList>
            <person name="Steele C.L."/>
            <person name="Donaldson J.R."/>
            <person name="Paul D."/>
            <person name="Banes M.M."/>
            <person name="Arick T."/>
            <person name="Bridges S.M."/>
            <person name="Lawrence M.L."/>
        </authorList>
    </citation>
    <scope>NUCLEOTIDE SEQUENCE [LARGE SCALE GENOMIC DNA]</scope>
    <source>
        <strain>HCC23</strain>
    </source>
</reference>
<organism>
    <name type="scientific">Listeria monocytogenes serotype 4a (strain HCC23)</name>
    <dbReference type="NCBI Taxonomy" id="552536"/>
    <lineage>
        <taxon>Bacteria</taxon>
        <taxon>Bacillati</taxon>
        <taxon>Bacillota</taxon>
        <taxon>Bacilli</taxon>
        <taxon>Bacillales</taxon>
        <taxon>Listeriaceae</taxon>
        <taxon>Listeria</taxon>
    </lineage>
</organism>
<protein>
    <recommendedName>
        <fullName evidence="1">Glycine cleavage system H protein</fullName>
    </recommendedName>
    <alternativeName>
        <fullName evidence="1">Octanoyl/lipoyl carrier protein</fullName>
    </alternativeName>
</protein>
<dbReference type="EMBL" id="CP001175">
    <property type="protein sequence ID" value="ACK38539.1"/>
    <property type="molecule type" value="Genomic_DNA"/>
</dbReference>
<dbReference type="RefSeq" id="WP_003723327.1">
    <property type="nucleotide sequence ID" value="NC_011660.1"/>
</dbReference>
<dbReference type="SMR" id="B8DDD3"/>
<dbReference type="KEGG" id="lmh:LMHCC_0177"/>
<dbReference type="HOGENOM" id="CLU_097408_2_0_9"/>
<dbReference type="GO" id="GO:0005829">
    <property type="term" value="C:cytosol"/>
    <property type="evidence" value="ECO:0007669"/>
    <property type="project" value="TreeGrafter"/>
</dbReference>
<dbReference type="GO" id="GO:0005960">
    <property type="term" value="C:glycine cleavage complex"/>
    <property type="evidence" value="ECO:0007669"/>
    <property type="project" value="InterPro"/>
</dbReference>
<dbReference type="GO" id="GO:0019464">
    <property type="term" value="P:glycine decarboxylation via glycine cleavage system"/>
    <property type="evidence" value="ECO:0007669"/>
    <property type="project" value="UniProtKB-UniRule"/>
</dbReference>
<dbReference type="CDD" id="cd06848">
    <property type="entry name" value="GCS_H"/>
    <property type="match status" value="1"/>
</dbReference>
<dbReference type="Gene3D" id="2.40.50.100">
    <property type="match status" value="1"/>
</dbReference>
<dbReference type="HAMAP" id="MF_00272">
    <property type="entry name" value="GcvH"/>
    <property type="match status" value="1"/>
</dbReference>
<dbReference type="InterPro" id="IPR003016">
    <property type="entry name" value="2-oxoA_DH_lipoyl-BS"/>
</dbReference>
<dbReference type="InterPro" id="IPR000089">
    <property type="entry name" value="Biotin_lipoyl"/>
</dbReference>
<dbReference type="InterPro" id="IPR002930">
    <property type="entry name" value="GCV_H"/>
</dbReference>
<dbReference type="InterPro" id="IPR033753">
    <property type="entry name" value="GCV_H/Fam206"/>
</dbReference>
<dbReference type="InterPro" id="IPR017453">
    <property type="entry name" value="GCV_H_sub"/>
</dbReference>
<dbReference type="InterPro" id="IPR011053">
    <property type="entry name" value="Single_hybrid_motif"/>
</dbReference>
<dbReference type="NCBIfam" id="TIGR00527">
    <property type="entry name" value="gcvH"/>
    <property type="match status" value="1"/>
</dbReference>
<dbReference type="NCBIfam" id="NF002270">
    <property type="entry name" value="PRK01202.1"/>
    <property type="match status" value="1"/>
</dbReference>
<dbReference type="PANTHER" id="PTHR11715">
    <property type="entry name" value="GLYCINE CLEAVAGE SYSTEM H PROTEIN"/>
    <property type="match status" value="1"/>
</dbReference>
<dbReference type="PANTHER" id="PTHR11715:SF3">
    <property type="entry name" value="GLYCINE CLEAVAGE SYSTEM H PROTEIN-RELATED"/>
    <property type="match status" value="1"/>
</dbReference>
<dbReference type="Pfam" id="PF01597">
    <property type="entry name" value="GCV_H"/>
    <property type="match status" value="1"/>
</dbReference>
<dbReference type="SUPFAM" id="SSF51230">
    <property type="entry name" value="Single hybrid motif"/>
    <property type="match status" value="1"/>
</dbReference>
<dbReference type="PROSITE" id="PS50968">
    <property type="entry name" value="BIOTINYL_LIPOYL"/>
    <property type="match status" value="1"/>
</dbReference>
<dbReference type="PROSITE" id="PS00189">
    <property type="entry name" value="LIPOYL"/>
    <property type="match status" value="1"/>
</dbReference>
<accession>B8DDD3</accession>